<name>GRK5_HUMAN</name>
<dbReference type="EC" id="2.7.11.16"/>
<dbReference type="EMBL" id="L15388">
    <property type="protein sequence ID" value="AAA58620.1"/>
    <property type="molecule type" value="mRNA"/>
</dbReference>
<dbReference type="EMBL" id="AL355273">
    <property type="status" value="NOT_ANNOTATED_CDS"/>
    <property type="molecule type" value="Genomic_DNA"/>
</dbReference>
<dbReference type="EMBL" id="AL355861">
    <property type="status" value="NOT_ANNOTATED_CDS"/>
    <property type="molecule type" value="Genomic_DNA"/>
</dbReference>
<dbReference type="EMBL" id="AL583824">
    <property type="status" value="NOT_ANNOTATED_CDS"/>
    <property type="molecule type" value="Genomic_DNA"/>
</dbReference>
<dbReference type="EMBL" id="CH471066">
    <property type="protein sequence ID" value="EAW49394.1"/>
    <property type="molecule type" value="Genomic_DNA"/>
</dbReference>
<dbReference type="EMBL" id="CH471066">
    <property type="protein sequence ID" value="EAW49395.1"/>
    <property type="molecule type" value="Genomic_DNA"/>
</dbReference>
<dbReference type="EMBL" id="BC064506">
    <property type="protein sequence ID" value="AAH64506.1"/>
    <property type="molecule type" value="mRNA"/>
</dbReference>
<dbReference type="CCDS" id="CCDS7612.1"/>
<dbReference type="PIR" id="A48277">
    <property type="entry name" value="A48277"/>
</dbReference>
<dbReference type="PIR" id="B48682">
    <property type="entry name" value="B48682"/>
</dbReference>
<dbReference type="RefSeq" id="NP_005299.1">
    <property type="nucleotide sequence ID" value="NM_005308.3"/>
</dbReference>
<dbReference type="PDB" id="4TNB">
    <property type="method" value="X-ray"/>
    <property type="resolution" value="2.11 A"/>
    <property type="chains" value="A=1-590"/>
</dbReference>
<dbReference type="PDB" id="4TND">
    <property type="method" value="X-ray"/>
    <property type="resolution" value="1.80 A"/>
    <property type="chains" value="A=1-590"/>
</dbReference>
<dbReference type="PDB" id="6PJX">
    <property type="method" value="X-ray"/>
    <property type="resolution" value="1.96 A"/>
    <property type="chains" value="A=1-590"/>
</dbReference>
<dbReference type="PDB" id="8UAP">
    <property type="method" value="X-ray"/>
    <property type="resolution" value="2.50 A"/>
    <property type="chains" value="A=1-590"/>
</dbReference>
<dbReference type="PDB" id="8UAQ">
    <property type="method" value="X-ray"/>
    <property type="resolution" value="2.80 A"/>
    <property type="chains" value="A=1-590"/>
</dbReference>
<dbReference type="PDB" id="9BRE">
    <property type="method" value="X-ray"/>
    <property type="resolution" value="2.80 A"/>
    <property type="chains" value="A=1-590"/>
</dbReference>
<dbReference type="PDB" id="9BRG">
    <property type="method" value="X-ray"/>
    <property type="resolution" value="2.70 A"/>
    <property type="chains" value="A=1-590"/>
</dbReference>
<dbReference type="PDB" id="9BRH">
    <property type="method" value="X-ray"/>
    <property type="resolution" value="3.69 A"/>
    <property type="chains" value="A=1-590"/>
</dbReference>
<dbReference type="PDB" id="9BRI">
    <property type="method" value="X-ray"/>
    <property type="resolution" value="2.90 A"/>
    <property type="chains" value="A=1-590"/>
</dbReference>
<dbReference type="PDB" id="9BRJ">
    <property type="method" value="X-ray"/>
    <property type="resolution" value="2.80 A"/>
    <property type="chains" value="A=1-590"/>
</dbReference>
<dbReference type="PDBsum" id="4TNB"/>
<dbReference type="PDBsum" id="4TND"/>
<dbReference type="PDBsum" id="6PJX"/>
<dbReference type="PDBsum" id="8UAP"/>
<dbReference type="PDBsum" id="8UAQ"/>
<dbReference type="PDBsum" id="9BRE"/>
<dbReference type="PDBsum" id="9BRG"/>
<dbReference type="PDBsum" id="9BRH"/>
<dbReference type="PDBsum" id="9BRI"/>
<dbReference type="PDBsum" id="9BRJ"/>
<dbReference type="SMR" id="P34947"/>
<dbReference type="BioGRID" id="109127">
    <property type="interactions" value="177"/>
</dbReference>
<dbReference type="CORUM" id="P34947"/>
<dbReference type="DIP" id="DIP-57457N"/>
<dbReference type="FunCoup" id="P34947">
    <property type="interactions" value="2153"/>
</dbReference>
<dbReference type="IntAct" id="P34947">
    <property type="interactions" value="5"/>
</dbReference>
<dbReference type="MINT" id="P34947"/>
<dbReference type="STRING" id="9606.ENSP00000376609"/>
<dbReference type="BindingDB" id="P34947"/>
<dbReference type="ChEMBL" id="CHEMBL5678"/>
<dbReference type="DrugCentral" id="P34947"/>
<dbReference type="GuidetoPHARMACOLOGY" id="1469"/>
<dbReference type="GlyGen" id="P34947">
    <property type="glycosylation" value="1 site, 1 N-linked glycan (1 site)"/>
</dbReference>
<dbReference type="iPTMnet" id="P34947"/>
<dbReference type="PhosphoSitePlus" id="P34947"/>
<dbReference type="BioMuta" id="GRK5"/>
<dbReference type="DMDM" id="462203"/>
<dbReference type="jPOST" id="P34947"/>
<dbReference type="MassIVE" id="P34947"/>
<dbReference type="PaxDb" id="9606-ENSP00000376609"/>
<dbReference type="PeptideAtlas" id="P34947"/>
<dbReference type="ProteomicsDB" id="54958"/>
<dbReference type="ABCD" id="P34947">
    <property type="antibodies" value="1 sequenced antibody"/>
</dbReference>
<dbReference type="Antibodypedia" id="18824">
    <property type="antibodies" value="504 antibodies from 38 providers"/>
</dbReference>
<dbReference type="DNASU" id="2869"/>
<dbReference type="Ensembl" id="ENST00000392870.3">
    <property type="protein sequence ID" value="ENSP00000376609.2"/>
    <property type="gene ID" value="ENSG00000198873.12"/>
</dbReference>
<dbReference type="GeneID" id="2869"/>
<dbReference type="KEGG" id="hsa:2869"/>
<dbReference type="MANE-Select" id="ENST00000392870.3">
    <property type="protein sequence ID" value="ENSP00000376609.2"/>
    <property type="RefSeq nucleotide sequence ID" value="NM_005308.3"/>
    <property type="RefSeq protein sequence ID" value="NP_005299.1"/>
</dbReference>
<dbReference type="UCSC" id="uc001led.4">
    <property type="organism name" value="human"/>
</dbReference>
<dbReference type="AGR" id="HGNC:4544"/>
<dbReference type="CTD" id="2869"/>
<dbReference type="DisGeNET" id="2869"/>
<dbReference type="GeneCards" id="GRK5"/>
<dbReference type="HGNC" id="HGNC:4544">
    <property type="gene designation" value="GRK5"/>
</dbReference>
<dbReference type="HPA" id="ENSG00000198873">
    <property type="expression patterns" value="Low tissue specificity"/>
</dbReference>
<dbReference type="MIM" id="600870">
    <property type="type" value="gene"/>
</dbReference>
<dbReference type="neXtProt" id="NX_P34947"/>
<dbReference type="OpenTargets" id="ENSG00000198873"/>
<dbReference type="PharmGKB" id="PA180"/>
<dbReference type="VEuPathDB" id="HostDB:ENSG00000198873"/>
<dbReference type="eggNOG" id="KOG0986">
    <property type="taxonomic scope" value="Eukaryota"/>
</dbReference>
<dbReference type="GeneTree" id="ENSGT00940000160702"/>
<dbReference type="HOGENOM" id="CLU_000288_63_41_1"/>
<dbReference type="InParanoid" id="P34947"/>
<dbReference type="OMA" id="WQTEMME"/>
<dbReference type="OrthoDB" id="354826at2759"/>
<dbReference type="PAN-GO" id="P34947">
    <property type="GO annotations" value="4 GO annotations based on evolutionary models"/>
</dbReference>
<dbReference type="PhylomeDB" id="P34947"/>
<dbReference type="TreeFam" id="TF313940"/>
<dbReference type="BRENDA" id="2.7.11.16">
    <property type="organism ID" value="2681"/>
</dbReference>
<dbReference type="PathwayCommons" id="P34947"/>
<dbReference type="Reactome" id="R-HSA-416476">
    <property type="pathway name" value="G alpha (q) signalling events"/>
</dbReference>
<dbReference type="Reactome" id="R-HSA-418555">
    <property type="pathway name" value="G alpha (s) signalling events"/>
</dbReference>
<dbReference type="SignaLink" id="P34947"/>
<dbReference type="SIGNOR" id="P34947"/>
<dbReference type="BioGRID-ORCS" id="2869">
    <property type="hits" value="15 hits in 1188 CRISPR screens"/>
</dbReference>
<dbReference type="CD-CODE" id="8C2F96ED">
    <property type="entry name" value="Centrosome"/>
</dbReference>
<dbReference type="ChiTaRS" id="GRK5">
    <property type="organism name" value="human"/>
</dbReference>
<dbReference type="EvolutionaryTrace" id="P34947"/>
<dbReference type="GeneWiki" id="GRK5"/>
<dbReference type="GenomeRNAi" id="2869"/>
<dbReference type="Pharos" id="P34947">
    <property type="development level" value="Tchem"/>
</dbReference>
<dbReference type="PRO" id="PR:P34947"/>
<dbReference type="Proteomes" id="UP000005640">
    <property type="component" value="Chromosome 10"/>
</dbReference>
<dbReference type="RNAct" id="P34947">
    <property type="molecule type" value="protein"/>
</dbReference>
<dbReference type="Bgee" id="ENSG00000198873">
    <property type="expression patterns" value="Expressed in saphenous vein and 196 other cell types or tissues"/>
</dbReference>
<dbReference type="GO" id="GO:0005737">
    <property type="term" value="C:cytoplasm"/>
    <property type="evidence" value="ECO:0000318"/>
    <property type="project" value="GO_Central"/>
</dbReference>
<dbReference type="GO" id="GO:0005829">
    <property type="term" value="C:cytosol"/>
    <property type="evidence" value="ECO:0000314"/>
    <property type="project" value="HPA"/>
</dbReference>
<dbReference type="GO" id="GO:0031965">
    <property type="term" value="C:nuclear membrane"/>
    <property type="evidence" value="ECO:0000314"/>
    <property type="project" value="HPA"/>
</dbReference>
<dbReference type="GO" id="GO:0016607">
    <property type="term" value="C:nuclear speck"/>
    <property type="evidence" value="ECO:0000314"/>
    <property type="project" value="HPA"/>
</dbReference>
<dbReference type="GO" id="GO:0005886">
    <property type="term" value="C:plasma membrane"/>
    <property type="evidence" value="ECO:0000314"/>
    <property type="project" value="UniProtKB"/>
</dbReference>
<dbReference type="GO" id="GO:0005524">
    <property type="term" value="F:ATP binding"/>
    <property type="evidence" value="ECO:0007669"/>
    <property type="project" value="UniProtKB-KW"/>
</dbReference>
<dbReference type="GO" id="GO:0047696">
    <property type="term" value="F:beta-adrenergic receptor kinase activity"/>
    <property type="evidence" value="ECO:0000315"/>
    <property type="project" value="CACAO"/>
</dbReference>
<dbReference type="GO" id="GO:0004703">
    <property type="term" value="F:G protein-coupled receptor kinase activity"/>
    <property type="evidence" value="ECO:0007669"/>
    <property type="project" value="UniProtKB-EC"/>
</dbReference>
<dbReference type="GO" id="GO:0005543">
    <property type="term" value="F:phospholipid binding"/>
    <property type="evidence" value="ECO:0000304"/>
    <property type="project" value="ProtInc"/>
</dbReference>
<dbReference type="GO" id="GO:0004672">
    <property type="term" value="F:protein kinase activity"/>
    <property type="evidence" value="ECO:0000318"/>
    <property type="project" value="GO_Central"/>
</dbReference>
<dbReference type="GO" id="GO:0005080">
    <property type="term" value="F:protein kinase C binding"/>
    <property type="evidence" value="ECO:0000304"/>
    <property type="project" value="ProtInc"/>
</dbReference>
<dbReference type="GO" id="GO:0004674">
    <property type="term" value="F:protein serine/threonine kinase activity"/>
    <property type="evidence" value="ECO:0000314"/>
    <property type="project" value="UniProtKB"/>
</dbReference>
<dbReference type="GO" id="GO:0007188">
    <property type="term" value="P:adenylate cyclase-modulating G protein-coupled receptor signaling pathway"/>
    <property type="evidence" value="ECO:0000304"/>
    <property type="project" value="ProtInc"/>
</dbReference>
<dbReference type="GO" id="GO:0006915">
    <property type="term" value="P:apoptotic process"/>
    <property type="evidence" value="ECO:0007669"/>
    <property type="project" value="UniProtKB-KW"/>
</dbReference>
<dbReference type="GO" id="GO:0045444">
    <property type="term" value="P:fat cell differentiation"/>
    <property type="evidence" value="ECO:0007669"/>
    <property type="project" value="Ensembl"/>
</dbReference>
<dbReference type="GO" id="GO:0007186">
    <property type="term" value="P:G protein-coupled receptor signaling pathway"/>
    <property type="evidence" value="ECO:0000304"/>
    <property type="project" value="Reactome"/>
</dbReference>
<dbReference type="GO" id="GO:0043066">
    <property type="term" value="P:negative regulation of apoptotic process"/>
    <property type="evidence" value="ECO:0000314"/>
    <property type="project" value="UniProtKB"/>
</dbReference>
<dbReference type="GO" id="GO:0008284">
    <property type="term" value="P:positive regulation of cell population proliferation"/>
    <property type="evidence" value="ECO:0000315"/>
    <property type="project" value="CACAO"/>
</dbReference>
<dbReference type="GO" id="GO:0046777">
    <property type="term" value="P:protein autophosphorylation"/>
    <property type="evidence" value="ECO:0000314"/>
    <property type="project" value="UniProtKB"/>
</dbReference>
<dbReference type="GO" id="GO:0051726">
    <property type="term" value="P:regulation of cell cycle"/>
    <property type="evidence" value="ECO:0000315"/>
    <property type="project" value="CACAO"/>
</dbReference>
<dbReference type="GO" id="GO:0008277">
    <property type="term" value="P:regulation of G protein-coupled receptor signaling pathway"/>
    <property type="evidence" value="ECO:0000304"/>
    <property type="project" value="ProtInc"/>
</dbReference>
<dbReference type="GO" id="GO:0009966">
    <property type="term" value="P:regulation of signal transduction"/>
    <property type="evidence" value="ECO:0000318"/>
    <property type="project" value="GO_Central"/>
</dbReference>
<dbReference type="GO" id="GO:0007217">
    <property type="term" value="P:tachykinin receptor signaling pathway"/>
    <property type="evidence" value="ECO:0000314"/>
    <property type="project" value="BHF-UCL"/>
</dbReference>
<dbReference type="GO" id="GO:0016055">
    <property type="term" value="P:Wnt signaling pathway"/>
    <property type="evidence" value="ECO:0007669"/>
    <property type="project" value="UniProtKB-KW"/>
</dbReference>
<dbReference type="CDD" id="cd05632">
    <property type="entry name" value="STKc_GRK5"/>
    <property type="match status" value="1"/>
</dbReference>
<dbReference type="FunFam" id="1.10.167.10:FF:000017">
    <property type="entry name" value="G protein-coupled receptor kinase"/>
    <property type="match status" value="1"/>
</dbReference>
<dbReference type="FunFam" id="1.10.510.10:FF:000074">
    <property type="entry name" value="G protein-coupled receptor kinase"/>
    <property type="match status" value="1"/>
</dbReference>
<dbReference type="Gene3D" id="6.10.250.2260">
    <property type="match status" value="1"/>
</dbReference>
<dbReference type="Gene3D" id="3.30.200.20">
    <property type="entry name" value="Phosphorylase Kinase, domain 1"/>
    <property type="match status" value="1"/>
</dbReference>
<dbReference type="Gene3D" id="1.10.167.10">
    <property type="entry name" value="Regulator of G-protein Signalling 4, domain 2"/>
    <property type="match status" value="1"/>
</dbReference>
<dbReference type="Gene3D" id="1.10.510.10">
    <property type="entry name" value="Transferase(Phosphotransferase) domain 1"/>
    <property type="match status" value="1"/>
</dbReference>
<dbReference type="InterPro" id="IPR000961">
    <property type="entry name" value="AGC-kinase_C"/>
</dbReference>
<dbReference type="InterPro" id="IPR000239">
    <property type="entry name" value="GPCR_kinase"/>
</dbReference>
<dbReference type="InterPro" id="IPR011009">
    <property type="entry name" value="Kinase-like_dom_sf"/>
</dbReference>
<dbReference type="InterPro" id="IPR000719">
    <property type="entry name" value="Prot_kinase_dom"/>
</dbReference>
<dbReference type="InterPro" id="IPR017441">
    <property type="entry name" value="Protein_kinase_ATP_BS"/>
</dbReference>
<dbReference type="InterPro" id="IPR016137">
    <property type="entry name" value="RGS"/>
</dbReference>
<dbReference type="InterPro" id="IPR036305">
    <property type="entry name" value="RGS_sf"/>
</dbReference>
<dbReference type="InterPro" id="IPR044926">
    <property type="entry name" value="RGS_subdomain_2"/>
</dbReference>
<dbReference type="PANTHER" id="PTHR24355:SF27">
    <property type="entry name" value="G PROTEIN-COUPLED RECEPTOR KINASE 5"/>
    <property type="match status" value="1"/>
</dbReference>
<dbReference type="PANTHER" id="PTHR24355">
    <property type="entry name" value="G PROTEIN-COUPLED RECEPTOR KINASE/RIBOSOMAL PROTEIN S6 KINASE"/>
    <property type="match status" value="1"/>
</dbReference>
<dbReference type="Pfam" id="PF00069">
    <property type="entry name" value="Pkinase"/>
    <property type="match status" value="1"/>
</dbReference>
<dbReference type="Pfam" id="PF00615">
    <property type="entry name" value="RGS"/>
    <property type="match status" value="1"/>
</dbReference>
<dbReference type="PRINTS" id="PR00717">
    <property type="entry name" value="GPCRKINASE"/>
</dbReference>
<dbReference type="SMART" id="SM00315">
    <property type="entry name" value="RGS"/>
    <property type="match status" value="1"/>
</dbReference>
<dbReference type="SMART" id="SM00133">
    <property type="entry name" value="S_TK_X"/>
    <property type="match status" value="1"/>
</dbReference>
<dbReference type="SMART" id="SM00220">
    <property type="entry name" value="S_TKc"/>
    <property type="match status" value="1"/>
</dbReference>
<dbReference type="SUPFAM" id="SSF56112">
    <property type="entry name" value="Protein kinase-like (PK-like)"/>
    <property type="match status" value="1"/>
</dbReference>
<dbReference type="SUPFAM" id="SSF48097">
    <property type="entry name" value="Regulator of G-protein signaling, RGS"/>
    <property type="match status" value="1"/>
</dbReference>
<dbReference type="PROSITE" id="PS51285">
    <property type="entry name" value="AGC_KINASE_CTER"/>
    <property type="match status" value="1"/>
</dbReference>
<dbReference type="PROSITE" id="PS00107">
    <property type="entry name" value="PROTEIN_KINASE_ATP"/>
    <property type="match status" value="1"/>
</dbReference>
<dbReference type="PROSITE" id="PS50011">
    <property type="entry name" value="PROTEIN_KINASE_DOM"/>
    <property type="match status" value="1"/>
</dbReference>
<dbReference type="PROSITE" id="PS50132">
    <property type="entry name" value="RGS"/>
    <property type="match status" value="1"/>
</dbReference>
<sequence>MELENIVANTVLLKAREGGGGKRKGKSKKWKEILKFPHISQCEDLRRTIDRDYCSLCDKQPIGRLLFRQFCETRPGLECYIQFLDSVAEYEVTPDEKLGEKGKEIMTKYLTPKSPVFIAQVGQDLVSQTEEKLLQKPCKELFSACAQSVHEYLRGEPFHEYLDSMFFDRFLQWKWLERQPVTKNTFRQYRVLGKGGFGEVCACQVRATGKMYACKRLEKKRIKKRKGESMALNEKQILEKVNSQFVVNLAYAYETKDALCLVLTIMNGGDLKFHIYNMGNPGFEEERALFYAAEILCGLEDLHRENTVYRDLKPENILLDDYGHIRISDLGLAVKIPEGDLIRGRVGTVGYMAPEVLNNQRYGLSPDYWGLGCLIYEMIEGQSPFRGRKEKVKREEVDRRVLETEEVYSHKFSEEAKSICKMLLTKDAKQRLGCQEEGAAEVKRHPFFRNMNFKRLEAGMLDPPFVPDPRAVYCKDVLDIEQFSTVKGVNLDHTDDDFYSKFSTGSVSIPWQNEMIETECFKELNVFGPNGTLPPDLNRNHPPEPPKKGLLQRLFKRQHQNNSKSSPSSKTSFNHHINSNHVSSNSTGSS</sequence>
<accession>P34947</accession>
<accession>D3DRD0</accession>
<accession>Q5T059</accession>
<protein>
    <recommendedName>
        <fullName>G protein-coupled receptor kinase 5</fullName>
        <ecNumber>2.7.11.16</ecNumber>
    </recommendedName>
    <alternativeName>
        <fullName>G protein-coupled receptor kinase GRK5</fullName>
    </alternativeName>
</protein>
<keyword id="KW-0002">3D-structure</keyword>
<keyword id="KW-0053">Apoptosis</keyword>
<keyword id="KW-0067">ATP-binding</keyword>
<keyword id="KW-1003">Cell membrane</keyword>
<keyword id="KW-0963">Cytoplasm</keyword>
<keyword id="KW-0418">Kinase</keyword>
<keyword id="KW-0446">Lipid-binding</keyword>
<keyword id="KW-0472">Membrane</keyword>
<keyword id="KW-0547">Nucleotide-binding</keyword>
<keyword id="KW-0539">Nucleus</keyword>
<keyword id="KW-0597">Phosphoprotein</keyword>
<keyword id="KW-1267">Proteomics identification</keyword>
<keyword id="KW-1185">Reference proteome</keyword>
<keyword id="KW-0723">Serine/threonine-protein kinase</keyword>
<keyword id="KW-0808">Transferase</keyword>
<keyword id="KW-0879">Wnt signaling pathway</keyword>
<proteinExistence type="evidence at protein level"/>
<comment type="function">
    <text evidence="12 13 14 15 16">Serine/threonine kinase that phosphorylates preferentially the activated forms of a variety of G-protein-coupled receptors (GPCRs). Such receptor phosphorylation initiates beta-arrestin-mediated receptor desensitization, internalization, and signaling events leading to their down-regulation. Phosphorylates a variety of GPCRs, including adrenergic receptors, muscarinic acetylcholine receptors (more specifically Gi-coupled M2/M4 subtypes), dopamine receptors and opioid receptors. In addition to GPCRs, also phosphorylates various substrates: Hsc70-interacting protein/ST13, TP53/p53, HDAC5, and arrestin-1/ARRB1. Phosphorylation of ARRB1 by GRK5 inhibits G-protein independent MAPK1/MAPK3 signaling downstream of 5HT4-receptors. Phosphorylation of HDAC5, a repressor of myocyte enhancer factor 2 (MEF2) leading to nuclear export of HDAC5 and allowing MEF2-mediated transcription. Phosphorylation of TP53/p53, a crucial tumor suppressor, inhibits TP53/p53-mediated apoptosis. Phosphorylation of ST13 regulates internalization of the chemokine receptor. Phosphorylates rhodopsin (RHO) (in vitro) and a non G-protein-coupled receptor, LRP6 during Wnt signaling (in vitro).</text>
</comment>
<comment type="catalytic activity">
    <reaction>
        <text>[G-protein-coupled receptor] + ATP = [G-protein-coupled receptor]-phosphate + ADP + H(+)</text>
        <dbReference type="Rhea" id="RHEA:12008"/>
        <dbReference type="Rhea" id="RHEA-COMP:11260"/>
        <dbReference type="Rhea" id="RHEA-COMP:11261"/>
        <dbReference type="ChEBI" id="CHEBI:15378"/>
        <dbReference type="ChEBI" id="CHEBI:30616"/>
        <dbReference type="ChEBI" id="CHEBI:43176"/>
        <dbReference type="ChEBI" id="CHEBI:68546"/>
        <dbReference type="ChEBI" id="CHEBI:456216"/>
        <dbReference type="EC" id="2.7.11.16"/>
    </reaction>
</comment>
<comment type="activity regulation">
    <text evidence="20">Inhibited by calmodulin with an IC(50) of 50 nM. Calmodulin inhibits GRK5 association with receptor and phospholipid.</text>
</comment>
<comment type="subunit">
    <text evidence="1 2 3 12 15 16">Interacts with ST13 (via the C-terminus 303-319 AA) (PubMed:21728385). Interacts with TP53/p53 (PubMed:20124405). Interacts with HTR4 (via C-terminus 330-346 AA); this interaction is promoted by 5-HT (serotonin) (PubMed:19661922). Interacts with HDAC5 (By similarity). Interacts with GIT1 (By similarity).</text>
</comment>
<comment type="interaction">
    <interactant intactId="EBI-7149314">
        <id>P34947</id>
    </interactant>
    <interactant intactId="EBI-307386">
        <id>P25963</id>
        <label>NFKBIA</label>
    </interactant>
    <organismsDiffer>false</organismsDiffer>
    <experiments>2</experiments>
</comment>
<comment type="interaction">
    <interactant intactId="EBI-7149314">
        <id>P34947</id>
    </interactant>
    <interactant intactId="EBI-7149283">
        <id>P97288</id>
        <label>Htr4</label>
    </interactant>
    <organismsDiffer>true</organismsDiffer>
    <experiments>8</experiments>
</comment>
<comment type="subcellular location">
    <subcellularLocation>
        <location>Cytoplasm</location>
    </subcellularLocation>
    <subcellularLocation>
        <location>Nucleus</location>
    </subcellularLocation>
    <subcellularLocation>
        <location>Cell membrane</location>
        <topology>Peripheral membrane protein</topology>
    </subcellularLocation>
    <text>Predominantly localized at the plasma membrane; targeted to the cell surface through the interaction with phospholipids. Nucleus localization is regulated in a GPCR and Ca(2+)/calmodulin-dependent fashion.</text>
</comment>
<comment type="tissue specificity">
    <text evidence="17">Highest levels in heart, placenta, lung &gt; skeletal muscle &gt; brain, liver, pancreas &gt; kidney.</text>
</comment>
<comment type="induction">
    <text evidence="19">Overexpressed during heart failure.</text>
</comment>
<comment type="PTM">
    <text evidence="18">Autophosphorylated. Autophosphorylation may play a critical role in the regulation of GRK5 kinase activity.</text>
</comment>
<comment type="polymorphism">
    <text>Variant Leu-41 variant is rare in European-Americans individuals but common in African-Americans individuals (40% of the African-American individuals studied carry at least one allele). Variant leu-41 is associated with decreased mortality in African-Americans with heart failure or cardiac ischemia.</text>
</comment>
<comment type="similarity">
    <text evidence="21">Belongs to the protein kinase superfamily. AGC Ser/Thr protein kinase family. GPRK subfamily.</text>
</comment>
<evidence type="ECO:0000250" key="1"/>
<evidence type="ECO:0000250" key="2">
    <source>
        <dbReference type="UniProtKB" id="Q62833"/>
    </source>
</evidence>
<evidence type="ECO:0000250" key="3">
    <source>
        <dbReference type="UniProtKB" id="Q8VEB1"/>
    </source>
</evidence>
<evidence type="ECO:0000255" key="4">
    <source>
        <dbReference type="PROSITE-ProRule" id="PRU00159"/>
    </source>
</evidence>
<evidence type="ECO:0000255" key="5">
    <source>
        <dbReference type="PROSITE-ProRule" id="PRU00171"/>
    </source>
</evidence>
<evidence type="ECO:0000255" key="6">
    <source>
        <dbReference type="PROSITE-ProRule" id="PRU00618"/>
    </source>
</evidence>
<evidence type="ECO:0000256" key="7">
    <source>
        <dbReference type="SAM" id="MobiDB-lite"/>
    </source>
</evidence>
<evidence type="ECO:0000269" key="8">
    <source>
    </source>
</evidence>
<evidence type="ECO:0000269" key="9">
    <source>
    </source>
</evidence>
<evidence type="ECO:0000269" key="10">
    <source>
    </source>
</evidence>
<evidence type="ECO:0000269" key="11">
    <source>
    </source>
</evidence>
<evidence type="ECO:0000269" key="12">
    <source>
    </source>
</evidence>
<evidence type="ECO:0000269" key="13">
    <source>
    </source>
</evidence>
<evidence type="ECO:0000269" key="14">
    <source>
    </source>
</evidence>
<evidence type="ECO:0000269" key="15">
    <source>
    </source>
</evidence>
<evidence type="ECO:0000269" key="16">
    <source>
    </source>
</evidence>
<evidence type="ECO:0000269" key="17">
    <source>
    </source>
</evidence>
<evidence type="ECO:0000269" key="18">
    <source>
    </source>
</evidence>
<evidence type="ECO:0000269" key="19">
    <source>
    </source>
</evidence>
<evidence type="ECO:0000269" key="20">
    <source>
    </source>
</evidence>
<evidence type="ECO:0000305" key="21"/>
<evidence type="ECO:0007744" key="22">
    <source>
    </source>
</evidence>
<evidence type="ECO:0007829" key="23">
    <source>
        <dbReference type="PDB" id="4TND"/>
    </source>
</evidence>
<evidence type="ECO:0007829" key="24">
    <source>
        <dbReference type="PDB" id="6PJX"/>
    </source>
</evidence>
<evidence type="ECO:0007829" key="25">
    <source>
        <dbReference type="PDB" id="8UAP"/>
    </source>
</evidence>
<evidence type="ECO:0007829" key="26">
    <source>
        <dbReference type="PDB" id="8UAQ"/>
    </source>
</evidence>
<feature type="chain" id="PRO_0000085971" description="G protein-coupled receptor kinase 5">
    <location>
        <begin position="1"/>
        <end position="590"/>
    </location>
</feature>
<feature type="domain" description="RGS" evidence="5">
    <location>
        <begin position="53"/>
        <end position="171"/>
    </location>
</feature>
<feature type="domain" description="Protein kinase" evidence="4">
    <location>
        <begin position="186"/>
        <end position="448"/>
    </location>
</feature>
<feature type="domain" description="AGC-kinase C-terminal" evidence="6">
    <location>
        <begin position="449"/>
        <end position="514"/>
    </location>
</feature>
<feature type="region of interest" description="N-terminal">
    <location>
        <begin position="1"/>
        <end position="185"/>
    </location>
</feature>
<feature type="region of interest" description="Interaction with calmodulin">
    <location>
        <begin position="20"/>
        <end position="39"/>
    </location>
</feature>
<feature type="region of interest" description="Disordered" evidence="7">
    <location>
        <begin position="531"/>
        <end position="590"/>
    </location>
</feature>
<feature type="region of interest" description="Sufficient for membrane localization">
    <location>
        <begin position="546"/>
        <end position="565"/>
    </location>
</feature>
<feature type="short sequence motif" description="Nuclear localization signal" evidence="9">
    <location>
        <begin position="388"/>
        <end position="395"/>
    </location>
</feature>
<feature type="compositionally biased region" description="Basic and acidic residues" evidence="7">
    <location>
        <begin position="538"/>
        <end position="547"/>
    </location>
</feature>
<feature type="compositionally biased region" description="Low complexity" evidence="7">
    <location>
        <begin position="563"/>
        <end position="590"/>
    </location>
</feature>
<feature type="active site" description="Proton acceptor" evidence="4">
    <location>
        <position position="311"/>
    </location>
</feature>
<feature type="binding site" evidence="4">
    <location>
        <begin position="192"/>
        <end position="200"/>
    </location>
    <ligand>
        <name>ATP</name>
        <dbReference type="ChEBI" id="CHEBI:30616"/>
    </ligand>
</feature>
<feature type="binding site" evidence="4">
    <location>
        <position position="215"/>
    </location>
    <ligand>
        <name>ATP</name>
        <dbReference type="ChEBI" id="CHEBI:30616"/>
    </ligand>
</feature>
<feature type="modified residue" description="Phosphoserine; by autocatalysis" evidence="18 22">
    <location>
        <position position="484"/>
    </location>
</feature>
<feature type="modified residue" description="Phosphothreonine; by autocatalysis" evidence="18 22">
    <location>
        <position position="485"/>
    </location>
</feature>
<feature type="modified residue" description="Phosphoserine" evidence="3">
    <location>
        <position position="579"/>
    </location>
</feature>
<feature type="sequence variant" id="VAR_040517" description="Exerts a protective effect in heart failure and ischemia; dbSNP:rs2230345." evidence="10 11">
    <original>Q</original>
    <variation>L</variation>
    <location>
        <position position="41"/>
    </location>
</feature>
<feature type="sequence variant" id="VAR_040518" description="In dbSNP:rs55980792." evidence="10">
    <original>A</original>
    <variation>V</variation>
    <location>
        <position position="119"/>
    </location>
</feature>
<feature type="sequence variant" id="VAR_040519" description="In dbSNP:rs55902633." evidence="10">
    <original>G</original>
    <variation>S</variation>
    <location>
        <position position="122"/>
    </location>
</feature>
<feature type="sequence variant" id="VAR_040520" description="In dbSNP:rs34679178." evidence="10">
    <original>T</original>
    <variation>M</variation>
    <location>
        <position position="129"/>
    </location>
</feature>
<feature type="sequence variant" id="VAR_040521" description="In dbSNP:rs56254855." evidence="10">
    <original>L</original>
    <variation>I</variation>
    <location>
        <position position="141"/>
    </location>
</feature>
<feature type="sequence variant" id="VAR_040522" description="In a lung neuroendocrine carcinoma sample; somatic mutation." evidence="10">
    <original>D</original>
    <variation>E</variation>
    <location>
        <position position="163"/>
    </location>
</feature>
<feature type="sequence variant" id="VAR_040523" description="In dbSNP:rs2230349." evidence="10">
    <original>R</original>
    <variation>H</variation>
    <location>
        <position position="304"/>
    </location>
</feature>
<feature type="mutagenesis site" description="Failed to phosphorylate p53/TP53." evidence="15">
    <original>K</original>
    <variation>R</variation>
    <location>
        <position position="215"/>
    </location>
</feature>
<feature type="mutagenesis site" description="Nuclear exclusion; when associated with A-389; A-391; A-393 and A-394." evidence="9">
    <original>R</original>
    <variation>A</variation>
    <location>
        <position position="388"/>
    </location>
</feature>
<feature type="mutagenesis site" description="Nuclear exclusion; when associated with A-388; A-391; A-393 and A-394." evidence="9">
    <original>K</original>
    <variation>A</variation>
    <location>
        <position position="389"/>
    </location>
</feature>
<feature type="mutagenesis site" description="Nuclear exclusion; when associated with A-388; A-389; A-393 and A-394." evidence="9">
    <original>K</original>
    <variation>A</variation>
    <location>
        <position position="391"/>
    </location>
</feature>
<feature type="mutagenesis site" description="Nuclear exclusion; when associated with A-388; A-389; A-391 and A-394." evidence="9">
    <original>K</original>
    <variation>A</variation>
    <location>
        <position position="393"/>
    </location>
</feature>
<feature type="mutagenesis site" description="Nuclear exclusion; when associated with A-388; A-389; A-391 and A-393." evidence="9">
    <original>R</original>
    <variation>A</variation>
    <location>
        <position position="394"/>
    </location>
</feature>
<feature type="mutagenesis site" description="15-20 fold defects in kinase activity; when associated with A-485." evidence="18">
    <original>S</original>
    <variation>A</variation>
    <location>
        <position position="484"/>
    </location>
</feature>
<feature type="mutagenesis site" description="15-20 fold defects in kinase activity; when associated with A-484." evidence="18">
    <original>T</original>
    <variation>A</variation>
    <location>
        <position position="485"/>
    </location>
</feature>
<feature type="mutagenesis site" description="No detectable plasma membrane localization; when associated with A-551; A-554; and A-555." evidence="8">
    <original>L</original>
    <variation>A</variation>
    <location>
        <position position="550"/>
    </location>
</feature>
<feature type="mutagenesis site" description="No detectable plasma membrane localization; when associated with A-550; A-554; and A-555." evidence="8">
    <original>L</original>
    <variation>A</variation>
    <location>
        <position position="551"/>
    </location>
</feature>
<feature type="mutagenesis site" description="No detectable plasma membrane localization; when associated with A-550; A-551; and A-555." evidence="8">
    <original>L</original>
    <variation>A</variation>
    <location>
        <position position="554"/>
    </location>
</feature>
<feature type="mutagenesis site" description="No detectable plasma membrane localization; when associated with A-550; A-551; and A-554." evidence="8">
    <original>F</original>
    <variation>A</variation>
    <location>
        <position position="555"/>
    </location>
</feature>
<feature type="helix" evidence="24">
    <location>
        <begin position="3"/>
        <end position="16"/>
    </location>
</feature>
<feature type="turn" evidence="24">
    <location>
        <begin position="17"/>
        <end position="20"/>
    </location>
</feature>
<feature type="helix" evidence="24">
    <location>
        <begin position="22"/>
        <end position="25"/>
    </location>
</feature>
<feature type="helix" evidence="23">
    <location>
        <begin position="30"/>
        <end position="33"/>
    </location>
</feature>
<feature type="helix" evidence="23">
    <location>
        <begin position="39"/>
        <end position="42"/>
    </location>
</feature>
<feature type="helix" evidence="23">
    <location>
        <begin position="43"/>
        <end position="48"/>
    </location>
</feature>
<feature type="helix" evidence="23">
    <location>
        <begin position="53"/>
        <end position="57"/>
    </location>
</feature>
<feature type="helix" evidence="23">
    <location>
        <begin position="61"/>
        <end position="71"/>
    </location>
</feature>
<feature type="helix" evidence="23">
    <location>
        <begin position="75"/>
        <end position="91"/>
    </location>
</feature>
<feature type="helix" evidence="23">
    <location>
        <begin position="95"/>
        <end position="97"/>
    </location>
</feature>
<feature type="helix" evidence="23">
    <location>
        <begin position="98"/>
        <end position="109"/>
    </location>
</feature>
<feature type="strand" evidence="25">
    <location>
        <begin position="111"/>
        <end position="113"/>
    </location>
</feature>
<feature type="helix" evidence="23">
    <location>
        <begin position="123"/>
        <end position="134"/>
    </location>
</feature>
<feature type="turn" evidence="23">
    <location>
        <begin position="139"/>
        <end position="142"/>
    </location>
</feature>
<feature type="helix" evidence="23">
    <location>
        <begin position="143"/>
        <end position="153"/>
    </location>
</feature>
<feature type="helix" evidence="23">
    <location>
        <begin position="156"/>
        <end position="162"/>
    </location>
</feature>
<feature type="helix" evidence="23">
    <location>
        <begin position="165"/>
        <end position="177"/>
    </location>
</feature>
<feature type="strand" evidence="23">
    <location>
        <begin position="185"/>
        <end position="195"/>
    </location>
</feature>
<feature type="strand" evidence="23">
    <location>
        <begin position="198"/>
        <end position="205"/>
    </location>
</feature>
<feature type="turn" evidence="23">
    <location>
        <begin position="206"/>
        <end position="208"/>
    </location>
</feature>
<feature type="strand" evidence="23">
    <location>
        <begin position="211"/>
        <end position="218"/>
    </location>
</feature>
<feature type="helix" evidence="23">
    <location>
        <begin position="219"/>
        <end position="224"/>
    </location>
</feature>
<feature type="helix" evidence="23">
    <location>
        <begin position="228"/>
        <end position="240"/>
    </location>
</feature>
<feature type="strand" evidence="23">
    <location>
        <begin position="249"/>
        <end position="254"/>
    </location>
</feature>
<feature type="strand" evidence="23">
    <location>
        <begin position="256"/>
        <end position="263"/>
    </location>
</feature>
<feature type="strand" evidence="23">
    <location>
        <begin position="268"/>
        <end position="270"/>
    </location>
</feature>
<feature type="helix" evidence="23">
    <location>
        <begin position="271"/>
        <end position="277"/>
    </location>
</feature>
<feature type="strand" evidence="23">
    <location>
        <begin position="278"/>
        <end position="280"/>
    </location>
</feature>
<feature type="helix" evidence="23">
    <location>
        <begin position="285"/>
        <end position="304"/>
    </location>
</feature>
<feature type="helix" evidence="23">
    <location>
        <begin position="314"/>
        <end position="316"/>
    </location>
</feature>
<feature type="strand" evidence="23">
    <location>
        <begin position="317"/>
        <end position="319"/>
    </location>
</feature>
<feature type="strand" evidence="26">
    <location>
        <begin position="321"/>
        <end position="323"/>
    </location>
</feature>
<feature type="strand" evidence="23">
    <location>
        <begin position="325"/>
        <end position="327"/>
    </location>
</feature>
<feature type="helix" evidence="23">
    <location>
        <begin position="330"/>
        <end position="332"/>
    </location>
</feature>
<feature type="helix" evidence="23">
    <location>
        <begin position="354"/>
        <end position="357"/>
    </location>
</feature>
<feature type="strand" evidence="24">
    <location>
        <begin position="362"/>
        <end position="364"/>
    </location>
</feature>
<feature type="helix" evidence="23">
    <location>
        <begin position="366"/>
        <end position="380"/>
    </location>
</feature>
<feature type="strand" evidence="26">
    <location>
        <begin position="381"/>
        <end position="383"/>
    </location>
</feature>
<feature type="strand" evidence="24">
    <location>
        <begin position="384"/>
        <end position="386"/>
    </location>
</feature>
<feature type="helix" evidence="23">
    <location>
        <begin position="394"/>
        <end position="403"/>
    </location>
</feature>
<feature type="helix" evidence="23">
    <location>
        <begin position="414"/>
        <end position="423"/>
    </location>
</feature>
<feature type="helix" evidence="23">
    <location>
        <begin position="428"/>
        <end position="430"/>
    </location>
</feature>
<feature type="turn" evidence="23">
    <location>
        <begin position="436"/>
        <end position="438"/>
    </location>
</feature>
<feature type="helix" evidence="23">
    <location>
        <begin position="439"/>
        <end position="443"/>
    </location>
</feature>
<feature type="helix" evidence="23">
    <location>
        <begin position="446"/>
        <end position="448"/>
    </location>
</feature>
<feature type="helix" evidence="23">
    <location>
        <begin position="453"/>
        <end position="457"/>
    </location>
</feature>
<feature type="helix" evidence="24">
    <location>
        <begin position="477"/>
        <end position="479"/>
    </location>
</feature>
<feature type="strand" evidence="23">
    <location>
        <begin position="489"/>
        <end position="491"/>
    </location>
</feature>
<feature type="helix" evidence="23">
    <location>
        <begin position="494"/>
        <end position="502"/>
    </location>
</feature>
<feature type="helix" evidence="23">
    <location>
        <begin position="508"/>
        <end position="517"/>
    </location>
</feature>
<feature type="helix" evidence="23">
    <location>
        <begin position="520"/>
        <end position="524"/>
    </location>
</feature>
<feature type="strand" evidence="23">
    <location>
        <begin position="529"/>
        <end position="531"/>
    </location>
</feature>
<feature type="helix" evidence="23">
    <location>
        <begin position="535"/>
        <end position="537"/>
    </location>
</feature>
<organism>
    <name type="scientific">Homo sapiens</name>
    <name type="common">Human</name>
    <dbReference type="NCBI Taxonomy" id="9606"/>
    <lineage>
        <taxon>Eukaryota</taxon>
        <taxon>Metazoa</taxon>
        <taxon>Chordata</taxon>
        <taxon>Craniata</taxon>
        <taxon>Vertebrata</taxon>
        <taxon>Euteleostomi</taxon>
        <taxon>Mammalia</taxon>
        <taxon>Eutheria</taxon>
        <taxon>Euarchontoglires</taxon>
        <taxon>Primates</taxon>
        <taxon>Haplorrhini</taxon>
        <taxon>Catarrhini</taxon>
        <taxon>Hominidae</taxon>
        <taxon>Homo</taxon>
    </lineage>
</organism>
<gene>
    <name type="primary">GRK5</name>
    <name type="synonym">GPRK5</name>
</gene>
<reference key="1">
    <citation type="journal article" date="1993" name="Proc. Natl. Acad. Sci. U.S.A.">
        <title>Cloning and expression of GRK5: a member of the G protein-coupled receptor kinase family.</title>
        <authorList>
            <person name="Kunapuli P."/>
            <person name="Benovic J.L."/>
        </authorList>
    </citation>
    <scope>NUCLEOTIDE SEQUENCE [MRNA]</scope>
    <scope>TISSUE SPECIFICITY</scope>
</reference>
<reference key="2">
    <citation type="journal article" date="2004" name="Nature">
        <title>The DNA sequence and comparative analysis of human chromosome 10.</title>
        <authorList>
            <person name="Deloukas P."/>
            <person name="Earthrowl M.E."/>
            <person name="Grafham D.V."/>
            <person name="Rubenfield M."/>
            <person name="French L."/>
            <person name="Steward C.A."/>
            <person name="Sims S.K."/>
            <person name="Jones M.C."/>
            <person name="Searle S."/>
            <person name="Scott C."/>
            <person name="Howe K."/>
            <person name="Hunt S.E."/>
            <person name="Andrews T.D."/>
            <person name="Gilbert J.G.R."/>
            <person name="Swarbreck D."/>
            <person name="Ashurst J.L."/>
            <person name="Taylor A."/>
            <person name="Battles J."/>
            <person name="Bird C.P."/>
            <person name="Ainscough R."/>
            <person name="Almeida J.P."/>
            <person name="Ashwell R.I.S."/>
            <person name="Ambrose K.D."/>
            <person name="Babbage A.K."/>
            <person name="Bagguley C.L."/>
            <person name="Bailey J."/>
            <person name="Banerjee R."/>
            <person name="Bates K."/>
            <person name="Beasley H."/>
            <person name="Bray-Allen S."/>
            <person name="Brown A.J."/>
            <person name="Brown J.Y."/>
            <person name="Burford D.C."/>
            <person name="Burrill W."/>
            <person name="Burton J."/>
            <person name="Cahill P."/>
            <person name="Camire D."/>
            <person name="Carter N.P."/>
            <person name="Chapman J.C."/>
            <person name="Clark S.Y."/>
            <person name="Clarke G."/>
            <person name="Clee C.M."/>
            <person name="Clegg S."/>
            <person name="Corby N."/>
            <person name="Coulson A."/>
            <person name="Dhami P."/>
            <person name="Dutta I."/>
            <person name="Dunn M."/>
            <person name="Faulkner L."/>
            <person name="Frankish A."/>
            <person name="Frankland J.A."/>
            <person name="Garner P."/>
            <person name="Garnett J."/>
            <person name="Gribble S."/>
            <person name="Griffiths C."/>
            <person name="Grocock R."/>
            <person name="Gustafson E."/>
            <person name="Hammond S."/>
            <person name="Harley J.L."/>
            <person name="Hart E."/>
            <person name="Heath P.D."/>
            <person name="Ho T.P."/>
            <person name="Hopkins B."/>
            <person name="Horne J."/>
            <person name="Howden P.J."/>
            <person name="Huckle E."/>
            <person name="Hynds C."/>
            <person name="Johnson C."/>
            <person name="Johnson D."/>
            <person name="Kana A."/>
            <person name="Kay M."/>
            <person name="Kimberley A.M."/>
            <person name="Kershaw J.K."/>
            <person name="Kokkinaki M."/>
            <person name="Laird G.K."/>
            <person name="Lawlor S."/>
            <person name="Lee H.M."/>
            <person name="Leongamornlert D.A."/>
            <person name="Laird G."/>
            <person name="Lloyd C."/>
            <person name="Lloyd D.M."/>
            <person name="Loveland J."/>
            <person name="Lovell J."/>
            <person name="McLaren S."/>
            <person name="McLay K.E."/>
            <person name="McMurray A."/>
            <person name="Mashreghi-Mohammadi M."/>
            <person name="Matthews L."/>
            <person name="Milne S."/>
            <person name="Nickerson T."/>
            <person name="Nguyen M."/>
            <person name="Overton-Larty E."/>
            <person name="Palmer S.A."/>
            <person name="Pearce A.V."/>
            <person name="Peck A.I."/>
            <person name="Pelan S."/>
            <person name="Phillimore B."/>
            <person name="Porter K."/>
            <person name="Rice C.M."/>
            <person name="Rogosin A."/>
            <person name="Ross M.T."/>
            <person name="Sarafidou T."/>
            <person name="Sehra H.K."/>
            <person name="Shownkeen R."/>
            <person name="Skuce C.D."/>
            <person name="Smith M."/>
            <person name="Standring L."/>
            <person name="Sycamore N."/>
            <person name="Tester J."/>
            <person name="Thorpe A."/>
            <person name="Torcasso W."/>
            <person name="Tracey A."/>
            <person name="Tromans A."/>
            <person name="Tsolas J."/>
            <person name="Wall M."/>
            <person name="Walsh J."/>
            <person name="Wang H."/>
            <person name="Weinstock K."/>
            <person name="West A.P."/>
            <person name="Willey D.L."/>
            <person name="Whitehead S.L."/>
            <person name="Wilming L."/>
            <person name="Wray P.W."/>
            <person name="Young L."/>
            <person name="Chen Y."/>
            <person name="Lovering R.C."/>
            <person name="Moschonas N.K."/>
            <person name="Siebert R."/>
            <person name="Fechtel K."/>
            <person name="Bentley D."/>
            <person name="Durbin R.M."/>
            <person name="Hubbard T."/>
            <person name="Doucette-Stamm L."/>
            <person name="Beck S."/>
            <person name="Smith D.R."/>
            <person name="Rogers J."/>
        </authorList>
    </citation>
    <scope>NUCLEOTIDE SEQUENCE [LARGE SCALE GENOMIC DNA]</scope>
</reference>
<reference key="3">
    <citation type="submission" date="2005-09" db="EMBL/GenBank/DDBJ databases">
        <authorList>
            <person name="Mural R.J."/>
            <person name="Istrail S."/>
            <person name="Sutton G.G."/>
            <person name="Florea L."/>
            <person name="Halpern A.L."/>
            <person name="Mobarry C.M."/>
            <person name="Lippert R."/>
            <person name="Walenz B."/>
            <person name="Shatkay H."/>
            <person name="Dew I."/>
            <person name="Miller J.R."/>
            <person name="Flanigan M.J."/>
            <person name="Edwards N.J."/>
            <person name="Bolanos R."/>
            <person name="Fasulo D."/>
            <person name="Halldorsson B.V."/>
            <person name="Hannenhalli S."/>
            <person name="Turner R."/>
            <person name="Yooseph S."/>
            <person name="Lu F."/>
            <person name="Nusskern D.R."/>
            <person name="Shue B.C."/>
            <person name="Zheng X.H."/>
            <person name="Zhong F."/>
            <person name="Delcher A.L."/>
            <person name="Huson D.H."/>
            <person name="Kravitz S.A."/>
            <person name="Mouchard L."/>
            <person name="Reinert K."/>
            <person name="Remington K.A."/>
            <person name="Clark A.G."/>
            <person name="Waterman M.S."/>
            <person name="Eichler E.E."/>
            <person name="Adams M.D."/>
            <person name="Hunkapiller M.W."/>
            <person name="Myers E.W."/>
            <person name="Venter J.C."/>
        </authorList>
    </citation>
    <scope>NUCLEOTIDE SEQUENCE [LARGE SCALE GENOMIC DNA]</scope>
</reference>
<reference key="4">
    <citation type="journal article" date="2004" name="Genome Res.">
        <title>The status, quality, and expansion of the NIH full-length cDNA project: the Mammalian Gene Collection (MGC).</title>
        <authorList>
            <consortium name="The MGC Project Team"/>
        </authorList>
    </citation>
    <scope>NUCLEOTIDE SEQUENCE [LARGE SCALE MRNA]</scope>
    <source>
        <tissue>Prostate</tissue>
    </source>
</reference>
<reference key="5">
    <citation type="journal article" date="1993" name="Circulation">
        <title>Altered expression of beta-adrenergic receptor kinase and beta 1-adrenergic receptors in the failing human heart.</title>
        <authorList>
            <person name="Ungerer M."/>
            <person name="Bohm M."/>
            <person name="Elce J.S."/>
            <person name="Erdmann E."/>
            <person name="Lohse M.J."/>
        </authorList>
    </citation>
    <scope>INDUCTION</scope>
</reference>
<reference key="6">
    <citation type="journal article" date="1994" name="J. Biol. Chem.">
        <title>Phospholipid-stimulated autophosphorylation activates the G protein-coupled receptor kinase GRK5.</title>
        <authorList>
            <person name="Kunapuli P."/>
            <person name="Gurevich V.V."/>
            <person name="Benovic J.L."/>
        </authorList>
    </citation>
    <scope>PHOSPHORYLATION AT SER-484 AND THR-485</scope>
    <scope>MUTAGENESIS OF SER-484 AND THR-485</scope>
</reference>
<reference key="7">
    <citation type="journal article" date="1997" name="J. Biol. Chem.">
        <title>Regulation of G protein-coupled receptor kinases by calmodulin and localization of the calmodulin binding domain.</title>
        <authorList>
            <person name="Pronin A.N."/>
            <person name="Satpaev D.K."/>
            <person name="Slepak V.Z."/>
            <person name="Benovic J.L."/>
        </authorList>
    </citation>
    <scope>ACTIVITY REGULATION</scope>
</reference>
<reference key="8">
    <citation type="journal article" date="2004" name="J. Biol. Chem.">
        <title>A predicted amphipathic helix mediates plasma membrane localization of GRK5.</title>
        <authorList>
            <person name="Thiyagarajan M.M."/>
            <person name="Stracquatanio R.P."/>
            <person name="Pronin A.N."/>
            <person name="Evanko D.S."/>
            <person name="Benovic J.L."/>
            <person name="Wedegaertner P.B."/>
        </authorList>
    </citation>
    <scope>SUBCELLULAR LOCATION</scope>
    <scope>MUTAGENESIS OF LEU-550; LEU-551; LEU-554 AND PHE-555</scope>
</reference>
<reference key="9">
    <citation type="journal article" date="2004" name="Mol. Cell. Biol.">
        <title>G protein-coupled receptor kinase 5 contains a DNA-binding nuclear localization sequence.</title>
        <authorList>
            <person name="Johnson L.R."/>
            <person name="Scott M.G."/>
            <person name="Pitcher J.A."/>
        </authorList>
    </citation>
    <scope>SUBCELLULAR LOCATION</scope>
    <scope>NUCLEAR LOCALIZATION SIGNAL</scope>
    <scope>MUTAGENESIS OF ARG-388; LYS-389; LYS-391; LYS-393 AND ARG-394</scope>
</reference>
<reference key="10">
    <citation type="journal article" date="2008" name="Proc. Natl. Acad. Sci. U.S.A.">
        <title>A quantitative atlas of mitotic phosphorylation.</title>
        <authorList>
            <person name="Dephoure N."/>
            <person name="Zhou C."/>
            <person name="Villen J."/>
            <person name="Beausoleil S.A."/>
            <person name="Bakalarski C.E."/>
            <person name="Elledge S.J."/>
            <person name="Gygi S.P."/>
        </authorList>
    </citation>
    <scope>PHOSPHORYLATION [LARGE SCALE ANALYSIS] AT SER-484 AND THR-485</scope>
    <scope>IDENTIFICATION BY MASS SPECTROMETRY [LARGE SCALE ANALYSIS]</scope>
    <source>
        <tissue>Cervix carcinoma</tissue>
    </source>
</reference>
<reference key="11">
    <citation type="journal article" date="2009" name="EMBO J.">
        <title>Beta-arrestin1 phosphorylation by GRK5 regulates G protein-independent 5-HT4 receptor signalling.</title>
        <authorList>
            <person name="Barthet G."/>
            <person name="Carrat G."/>
            <person name="Cassier E."/>
            <person name="Barker B."/>
            <person name="Gaven F."/>
            <person name="Pillot M."/>
            <person name="Framery B."/>
            <person name="Pellissier L.P."/>
            <person name="Augier J."/>
            <person name="Kang D.S."/>
            <person name="Claeysen S."/>
            <person name="Reiter E."/>
            <person name="Baneres J.L."/>
            <person name="Benovic J.L."/>
            <person name="Marin P."/>
            <person name="Bockaert J."/>
            <person name="Dumuis A."/>
        </authorList>
    </citation>
    <scope>FUNCTION IN PHOSPHORYLATION OF ARRB1</scope>
    <scope>INTERACTION WITH HTR4</scope>
</reference>
<reference key="12">
    <citation type="journal article" date="2009" name="J. Biol. Chem.">
        <title>G Protein-coupled receptor kinases phosphorylate LRP6 in the Wnt pathway.</title>
        <authorList>
            <person name="Chen M."/>
            <person name="Philipp M."/>
            <person name="Wang J."/>
            <person name="Premont R.T."/>
            <person name="Garrison T.R."/>
            <person name="Caron M.G."/>
            <person name="Lefkowitz R.J."/>
            <person name="Chen W."/>
        </authorList>
    </citation>
    <scope>FUNCTION IN PHOSPHORYLATION OF LRP6</scope>
</reference>
<reference key="13">
    <citation type="journal article" date="2010" name="J. Biol. Chem.">
        <title>G-protein-coupled receptor kinase 5 phosphorylates p53 and inhibits DNA damage-induced apoptosis.</title>
        <authorList>
            <person name="Chen X."/>
            <person name="Zhu H."/>
            <person name="Yuan M."/>
            <person name="Fu J."/>
            <person name="Zhou Y."/>
            <person name="Ma L."/>
        </authorList>
    </citation>
    <scope>FUNCTION IN PHOSPHORYLATION OF TP53</scope>
    <scope>INTERACTION WITH TP53</scope>
    <scope>MUTAGENESIS OF LYS-215</scope>
</reference>
<reference key="14">
    <citation type="journal article" date="2010" name="Mol. Pharmacol.">
        <title>Role for the regulator of G-protein signaling homology domain of G protein-coupled receptor kinases 5 and 6 in beta 2-adrenergic receptor and rhodopsin phosphorylation.</title>
        <authorList>
            <person name="Baameur F."/>
            <person name="Morgan D.H."/>
            <person name="Yao H."/>
            <person name="Tran T.M."/>
            <person name="Hammitt R.A."/>
            <person name="Sabui S."/>
            <person name="McMurray J.S."/>
            <person name="Lichtarge O."/>
            <person name="Clark R.B."/>
        </authorList>
    </citation>
    <scope>FUNCTION IN PHOSPHORYLATION OF ADRB2</scope>
    <scope>AUTOPHOSPHORYLATION</scope>
</reference>
<reference key="15">
    <citation type="journal article" date="2011" name="Biochemistry">
        <title>G protein-coupled receptor kinase 5 phosphorylation of Hip regulates internalization of the chemokine receptor CXCR4.</title>
        <authorList>
            <person name="Barker B.L."/>
            <person name="Benovic J.L."/>
        </authorList>
    </citation>
    <scope>FUNCTION IN PHOSPHORYLATION OF ST13</scope>
    <scope>INTERACTION WITH ST13</scope>
</reference>
<reference key="16">
    <citation type="journal article" date="2007" name="Nature">
        <title>Patterns of somatic mutation in human cancer genomes.</title>
        <authorList>
            <person name="Greenman C."/>
            <person name="Stephens P."/>
            <person name="Smith R."/>
            <person name="Dalgliesh G.L."/>
            <person name="Hunter C."/>
            <person name="Bignell G."/>
            <person name="Davies H."/>
            <person name="Teague J."/>
            <person name="Butler A."/>
            <person name="Stevens C."/>
            <person name="Edkins S."/>
            <person name="O'Meara S."/>
            <person name="Vastrik I."/>
            <person name="Schmidt E.E."/>
            <person name="Avis T."/>
            <person name="Barthorpe S."/>
            <person name="Bhamra G."/>
            <person name="Buck G."/>
            <person name="Choudhury B."/>
            <person name="Clements J."/>
            <person name="Cole J."/>
            <person name="Dicks E."/>
            <person name="Forbes S."/>
            <person name="Gray K."/>
            <person name="Halliday K."/>
            <person name="Harrison R."/>
            <person name="Hills K."/>
            <person name="Hinton J."/>
            <person name="Jenkinson A."/>
            <person name="Jones D."/>
            <person name="Menzies A."/>
            <person name="Mironenko T."/>
            <person name="Perry J."/>
            <person name="Raine K."/>
            <person name="Richardson D."/>
            <person name="Shepherd R."/>
            <person name="Small A."/>
            <person name="Tofts C."/>
            <person name="Varian J."/>
            <person name="Webb T."/>
            <person name="West S."/>
            <person name="Widaa S."/>
            <person name="Yates A."/>
            <person name="Cahill D.P."/>
            <person name="Louis D.N."/>
            <person name="Goldstraw P."/>
            <person name="Nicholson A.G."/>
            <person name="Brasseur F."/>
            <person name="Looijenga L."/>
            <person name="Weber B.L."/>
            <person name="Chiew Y.-E."/>
            <person name="DeFazio A."/>
            <person name="Greaves M.F."/>
            <person name="Green A.R."/>
            <person name="Campbell P."/>
            <person name="Birney E."/>
            <person name="Easton D.F."/>
            <person name="Chenevix-Trench G."/>
            <person name="Tan M.-H."/>
            <person name="Khoo S.K."/>
            <person name="Teh B.T."/>
            <person name="Yuen S.T."/>
            <person name="Leung S.Y."/>
            <person name="Wooster R."/>
            <person name="Futreal P.A."/>
            <person name="Stratton M.R."/>
        </authorList>
    </citation>
    <scope>VARIANTS [LARGE SCALE ANALYSIS] LEU-41; VAL-119; SER-122; MET-129; ILE-141; GLU-163 AND HIS-304</scope>
</reference>
<reference key="17">
    <citation type="journal article" date="2008" name="Nat. Med.">
        <title>A GRK5 polymorphism that inhibits beta-adrenergic receptor signaling is protective in heart failure.</title>
        <authorList>
            <person name="Liggett S.B."/>
            <person name="Cresci S."/>
            <person name="Kelly R.J."/>
            <person name="Syed F.M."/>
            <person name="Matkovich S.J."/>
            <person name="Hahn H.S."/>
            <person name="Diwan A."/>
            <person name="Martini J.S."/>
            <person name="Sparks L."/>
            <person name="Parekh R.R."/>
            <person name="Spertus J.A."/>
            <person name="Koch W.J."/>
            <person name="Kardia S.L."/>
            <person name="Dorn G.W. II"/>
        </authorList>
    </citation>
    <scope>VARIANT LEU-41</scope>
    <scope>CHARACTERIZATION OF VARIANT LEU-41</scope>
    <scope>POLYMORPHISM</scope>
    <scope>POSSIBLE PROTECTIVE ROLE IN THE PROGRESSION OF HEART FAILURE</scope>
</reference>